<proteinExistence type="evidence at transcript level"/>
<dbReference type="EC" id="1.1.1.34" evidence="6"/>
<dbReference type="EMBL" id="JAATIP010000034">
    <property type="protein sequence ID" value="KAF4388564.1"/>
    <property type="molecule type" value="Genomic_DNA"/>
</dbReference>
<dbReference type="EMBL" id="UZAU01000046">
    <property type="status" value="NOT_ANNOTATED_CDS"/>
    <property type="molecule type" value="Genomic_DNA"/>
</dbReference>
<dbReference type="EMBL" id="KY014572">
    <property type="protein sequence ID" value="ARE72268.1"/>
    <property type="molecule type" value="mRNA"/>
</dbReference>
<dbReference type="SMR" id="A0A7J6H013"/>
<dbReference type="EnsemblPlants" id="novel_model_1685_5bd9a17a.1.5bd9b136">
    <property type="protein sequence ID" value="cds.novel_model_1685_5bd9a17a.1.5bd9b136"/>
    <property type="gene ID" value="novel_gene_924_5bd9a17a"/>
</dbReference>
<dbReference type="Gramene" id="novel_model_1685_5bd9a17a.1.5bd9b136">
    <property type="protein sequence ID" value="cds.novel_model_1685_5bd9a17a.1.5bd9b136"/>
    <property type="gene ID" value="novel_gene_924_5bd9a17a"/>
</dbReference>
<dbReference type="OMA" id="NPENFDT"/>
<dbReference type="OrthoDB" id="310654at2759"/>
<dbReference type="UniPathway" id="UPA00058">
    <property type="reaction ID" value="UER00103"/>
</dbReference>
<dbReference type="Proteomes" id="UP000525078">
    <property type="component" value="Unassembled WGS sequence"/>
</dbReference>
<dbReference type="Proteomes" id="UP000596661">
    <property type="component" value="Chromosome 1"/>
</dbReference>
<dbReference type="GO" id="GO:0031969">
    <property type="term" value="C:chloroplast membrane"/>
    <property type="evidence" value="ECO:0007669"/>
    <property type="project" value="UniProtKB-SubCell"/>
</dbReference>
<dbReference type="GO" id="GO:0005789">
    <property type="term" value="C:endoplasmic reticulum membrane"/>
    <property type="evidence" value="ECO:0007669"/>
    <property type="project" value="UniProtKB-SubCell"/>
</dbReference>
<dbReference type="GO" id="GO:0005778">
    <property type="term" value="C:peroxisomal membrane"/>
    <property type="evidence" value="ECO:0007669"/>
    <property type="project" value="UniProtKB-SubCell"/>
</dbReference>
<dbReference type="GO" id="GO:0004420">
    <property type="term" value="F:hydroxymethylglutaryl-CoA reductase (NADPH) activity"/>
    <property type="evidence" value="ECO:0007669"/>
    <property type="project" value="UniProtKB-EC"/>
</dbReference>
<dbReference type="GO" id="GO:0015936">
    <property type="term" value="P:coenzyme A metabolic process"/>
    <property type="evidence" value="ECO:0007669"/>
    <property type="project" value="InterPro"/>
</dbReference>
<dbReference type="GO" id="GO:0008299">
    <property type="term" value="P:isoprenoid biosynthetic process"/>
    <property type="evidence" value="ECO:0007669"/>
    <property type="project" value="UniProtKB-KW"/>
</dbReference>
<dbReference type="GO" id="GO:0016126">
    <property type="term" value="P:sterol biosynthetic process"/>
    <property type="evidence" value="ECO:0007669"/>
    <property type="project" value="TreeGrafter"/>
</dbReference>
<dbReference type="CDD" id="cd00643">
    <property type="entry name" value="HMG-CoA_reductase_classI"/>
    <property type="match status" value="1"/>
</dbReference>
<dbReference type="FunFam" id="1.10.3270.10:FF:000002">
    <property type="entry name" value="3-hydroxy-3-methylglutaryl coenzyme A reductase"/>
    <property type="match status" value="1"/>
</dbReference>
<dbReference type="FunFam" id="3.30.70.420:FF:000001">
    <property type="entry name" value="3-hydroxy-3-methylglutaryl coenzyme A reductase"/>
    <property type="match status" value="1"/>
</dbReference>
<dbReference type="FunFam" id="3.90.770.10:FF:000001">
    <property type="entry name" value="3-hydroxy-3-methylglutaryl coenzyme A reductase"/>
    <property type="match status" value="1"/>
</dbReference>
<dbReference type="Gene3D" id="3.90.770.10">
    <property type="entry name" value="3-hydroxy-3-methylglutaryl-coenzyme A Reductase, Chain A, domain 2"/>
    <property type="match status" value="1"/>
</dbReference>
<dbReference type="Gene3D" id="1.10.3270.10">
    <property type="entry name" value="HMGR, N-terminal domain"/>
    <property type="match status" value="1"/>
</dbReference>
<dbReference type="Gene3D" id="3.30.70.420">
    <property type="entry name" value="Hydroxymethylglutaryl-CoA reductase, class I/II, NAD/NADP-binding domain"/>
    <property type="match status" value="1"/>
</dbReference>
<dbReference type="InterPro" id="IPR002202">
    <property type="entry name" value="HMG_CoA_Rdtase"/>
</dbReference>
<dbReference type="InterPro" id="IPR023074">
    <property type="entry name" value="HMG_CoA_Rdtase_cat_sf"/>
</dbReference>
<dbReference type="InterPro" id="IPR023076">
    <property type="entry name" value="HMG_CoA_Rdtase_CS"/>
</dbReference>
<dbReference type="InterPro" id="IPR004554">
    <property type="entry name" value="HMG_CoA_Rdtase_eu_arc"/>
</dbReference>
<dbReference type="InterPro" id="IPR023282">
    <property type="entry name" value="HMG_CoA_Rdtase_N"/>
</dbReference>
<dbReference type="InterPro" id="IPR009023">
    <property type="entry name" value="HMG_CoA_Rdtase_NAD(P)-bd_sf"/>
</dbReference>
<dbReference type="InterPro" id="IPR009029">
    <property type="entry name" value="HMG_CoA_Rdtase_sub-bd_dom_sf"/>
</dbReference>
<dbReference type="NCBIfam" id="TIGR00533">
    <property type="entry name" value="HMG_CoA_R_NADP"/>
    <property type="match status" value="1"/>
</dbReference>
<dbReference type="PANTHER" id="PTHR10572">
    <property type="entry name" value="3-HYDROXY-3-METHYLGLUTARYL-COENZYME A REDUCTASE"/>
    <property type="match status" value="1"/>
</dbReference>
<dbReference type="PANTHER" id="PTHR10572:SF24">
    <property type="entry name" value="3-HYDROXY-3-METHYLGLUTARYL-COENZYME A REDUCTASE"/>
    <property type="match status" value="1"/>
</dbReference>
<dbReference type="Pfam" id="PF00368">
    <property type="entry name" value="HMG-CoA_red"/>
    <property type="match status" value="1"/>
</dbReference>
<dbReference type="PRINTS" id="PR00071">
    <property type="entry name" value="HMGCOARDTASE"/>
</dbReference>
<dbReference type="SUPFAM" id="SSF55035">
    <property type="entry name" value="NAD-binding domain of HMG-CoA reductase"/>
    <property type="match status" value="1"/>
</dbReference>
<dbReference type="SUPFAM" id="SSF56542">
    <property type="entry name" value="Substrate-binding domain of HMG-CoA reductase"/>
    <property type="match status" value="1"/>
</dbReference>
<dbReference type="PROSITE" id="PS00066">
    <property type="entry name" value="HMG_COA_REDUCTASE_1"/>
    <property type="match status" value="1"/>
</dbReference>
<dbReference type="PROSITE" id="PS00318">
    <property type="entry name" value="HMG_COA_REDUCTASE_2"/>
    <property type="match status" value="1"/>
</dbReference>
<dbReference type="PROSITE" id="PS01192">
    <property type="entry name" value="HMG_COA_REDUCTASE_3"/>
    <property type="match status" value="1"/>
</dbReference>
<dbReference type="PROSITE" id="PS50065">
    <property type="entry name" value="HMG_COA_REDUCTASE_4"/>
    <property type="match status" value="1"/>
</dbReference>
<organism>
    <name type="scientific">Cannabis sativa</name>
    <name type="common">Hemp</name>
    <name type="synonym">Marijuana</name>
    <dbReference type="NCBI Taxonomy" id="3483"/>
    <lineage>
        <taxon>Eukaryota</taxon>
        <taxon>Viridiplantae</taxon>
        <taxon>Streptophyta</taxon>
        <taxon>Embryophyta</taxon>
        <taxon>Tracheophyta</taxon>
        <taxon>Spermatophyta</taxon>
        <taxon>Magnoliopsida</taxon>
        <taxon>eudicotyledons</taxon>
        <taxon>Gunneridae</taxon>
        <taxon>Pentapetalae</taxon>
        <taxon>rosids</taxon>
        <taxon>fabids</taxon>
        <taxon>Rosales</taxon>
        <taxon>Cannabaceae</taxon>
        <taxon>Cannabis</taxon>
    </lineage>
</organism>
<accession>A0A7J6H013</accession>
<accession>A0A1V0QSG7</accession>
<accession>A0A803QUX7</accession>
<accession>A0A803QUX8</accession>
<feature type="chain" id="PRO_0000460889" description="3-hydroxy-3-methylglutaryl coenzyme A reductase 1">
    <location>
        <begin position="1"/>
        <end position="576"/>
    </location>
</feature>
<feature type="transmembrane region" description="Helical" evidence="4">
    <location>
        <begin position="42"/>
        <end position="62"/>
    </location>
</feature>
<feature type="transmembrane region" description="Helical" evidence="4">
    <location>
        <begin position="89"/>
        <end position="109"/>
    </location>
</feature>
<feature type="transmembrane region" description="Helical" evidence="4">
    <location>
        <begin position="532"/>
        <end position="552"/>
    </location>
</feature>
<feature type="region of interest" description="Disordered" evidence="7">
    <location>
        <begin position="1"/>
        <end position="35"/>
    </location>
</feature>
<feature type="active site" description="Charge relay system" evidence="2">
    <location>
        <position position="255"/>
    </location>
</feature>
<feature type="active site" description="Charge relay system" evidence="2">
    <location>
        <position position="387"/>
    </location>
</feature>
<feature type="active site" description="Charge relay system" evidence="2">
    <location>
        <position position="463"/>
    </location>
</feature>
<feature type="active site" description="Proton donor" evidence="6">
    <location>
        <position position="561"/>
    </location>
</feature>
<feature type="glycosylation site" description="N-linked (GlcNAc...) asparagine" evidence="5">
    <location>
        <position position="319"/>
    </location>
</feature>
<feature type="glycosylation site" description="N-linked (GlcNAc...) asparagine" evidence="5">
    <location>
        <position position="565"/>
    </location>
</feature>
<feature type="sequence conflict" description="In Ref. 2; ARE72268." evidence="10" ref="2">
    <original>D</original>
    <variation>E</variation>
    <location>
        <position position="134"/>
    </location>
</feature>
<feature type="sequence conflict" description="In Ref. 2; ARE72268." evidence="10" ref="2">
    <original>M</original>
    <variation>L</variation>
    <location>
        <position position="241"/>
    </location>
</feature>
<name>HMGR1_CANSA</name>
<sequence length="576" mass="62070">MDSRRRPSKPLLTSSGEVLHRKQASPVTDEDQIHRSPKASDALPLPLYLTNAVFFTLFFSVAYYLLHRWRDKIRNSTPLHVVTLSEIAAIVSLIASFIYLLGFFGIDFVQSFIARASHEAWDLDDATPDFLVDDSGCPPPCPIVRTPNLDRQVLATLSSEEDEEIINSVVQGKVPSYSLESKIGDCKRAAAIRREALQRTTRRSLQGLPLEGFDYESILGQCCEMPVGYVQIPVGIAGPLMLDGFEYSVPMATTEGCLIASTNRGCKAIHLSGGASSVLLRDGMTRAPVVRFSSAKRASELKFFLEDPENFDTLSMVFNRSSRFARLQGIQCAIAGKNVYVRFTCSTGDAMGMNMVSKGVQNVLDFLQTDFHDMDVIGISGNFCSDKKPAAVNWIEGRGKSVVCEAVINEEVVKKVLKTNIDALVELNMLKNLAGSAIAGALGGFNAHASNIVSAIFIATGQDPAQNIESSHCITMMEAINNGKDLHVSVTMPSIEVGTVGGGTQLASQSACLNLLGVKGSNKDSPGANSRLLATIVAGSVLAGELSLMSAIAAGQLVKSHMKYNRSSKDMSKVAC</sequence>
<comment type="function">
    <text evidence="1 3">Catalyzes the synthesis of mevalonate, the specific precursor of all isoprenoid compounds present in plants (By similarity). Component of the triterpene saponins (e.g. ginsenosides or panaxosides) and phytosterols biosynthetic pathways (By similarity). Promotes triterpenes accumulation in roots (By similarity).</text>
</comment>
<comment type="catalytic activity">
    <reaction evidence="6">
        <text>(R)-mevalonate + 2 NADP(+) + CoA = (3S)-3-hydroxy-3-methylglutaryl-CoA + 2 NADPH + 2 H(+)</text>
        <dbReference type="Rhea" id="RHEA:15989"/>
        <dbReference type="ChEBI" id="CHEBI:15378"/>
        <dbReference type="ChEBI" id="CHEBI:36464"/>
        <dbReference type="ChEBI" id="CHEBI:43074"/>
        <dbReference type="ChEBI" id="CHEBI:57287"/>
        <dbReference type="ChEBI" id="CHEBI:57783"/>
        <dbReference type="ChEBI" id="CHEBI:58349"/>
        <dbReference type="EC" id="1.1.1.34"/>
    </reaction>
    <physiologicalReaction direction="right-to-left" evidence="3">
        <dbReference type="Rhea" id="RHEA:15991"/>
    </physiologicalReaction>
</comment>
<comment type="pathway">
    <text evidence="1">Metabolic intermediate biosynthesis; (R)-mevalonate biosynthesis; (R)-mevalonate from acetyl-CoA: step 3/3.</text>
</comment>
<comment type="subcellular location">
    <subcellularLocation>
        <location evidence="1">Endoplasmic reticulum membrane</location>
        <topology evidence="4">Multi-pass membrane protein</topology>
    </subcellularLocation>
    <subcellularLocation>
        <location evidence="1">Plastid</location>
        <location evidence="1">Chloroplast membrane</location>
        <topology evidence="4">Multi-pass membrane protein</topology>
    </subcellularLocation>
    <subcellularLocation>
        <location evidence="1">Peroxisome membrane</location>
        <topology evidence="4">Multi-pass membrane protein</topology>
    </subcellularLocation>
</comment>
<comment type="tissue specificity">
    <text evidence="8">Expressed in trichomes, leaves, flowers, roots and stems.</text>
</comment>
<comment type="similarity">
    <text evidence="10">Belongs to the HMG-CoA reductase family.</text>
</comment>
<keyword id="KW-0150">Chloroplast</keyword>
<keyword id="KW-0256">Endoplasmic reticulum</keyword>
<keyword id="KW-0325">Glycoprotein</keyword>
<keyword id="KW-0414">Isoprene biosynthesis</keyword>
<keyword id="KW-0472">Membrane</keyword>
<keyword id="KW-0521">NADP</keyword>
<keyword id="KW-0560">Oxidoreductase</keyword>
<keyword id="KW-0576">Peroxisome</keyword>
<keyword id="KW-0934">Plastid</keyword>
<keyword id="KW-0812">Transmembrane</keyword>
<keyword id="KW-1133">Transmembrane helix</keyword>
<evidence type="ECO:0000250" key="1">
    <source>
        <dbReference type="UniProtKB" id="A0A0A1C3I2"/>
    </source>
</evidence>
<evidence type="ECO:0000250" key="2">
    <source>
        <dbReference type="UniProtKB" id="P04035"/>
    </source>
</evidence>
<evidence type="ECO:0000250" key="3">
    <source>
        <dbReference type="UniProtKB" id="P14891"/>
    </source>
</evidence>
<evidence type="ECO:0000255" key="4"/>
<evidence type="ECO:0000255" key="5">
    <source>
        <dbReference type="PROSITE-ProRule" id="PRU00498"/>
    </source>
</evidence>
<evidence type="ECO:0000255" key="6">
    <source>
        <dbReference type="PROSITE-ProRule" id="PRU10003"/>
    </source>
</evidence>
<evidence type="ECO:0000256" key="7">
    <source>
        <dbReference type="SAM" id="MobiDB-lite"/>
    </source>
</evidence>
<evidence type="ECO:0000269" key="8">
    <source>
    </source>
</evidence>
<evidence type="ECO:0000303" key="9">
    <source>
    </source>
</evidence>
<evidence type="ECO:0000305" key="10"/>
<evidence type="ECO:0000312" key="11">
    <source>
        <dbReference type="EMBL" id="KAF4388564.1"/>
    </source>
</evidence>
<gene>
    <name evidence="9" type="primary">HMGR1</name>
    <name evidence="11" type="ORF">F8388_012541</name>
</gene>
<protein>
    <recommendedName>
        <fullName evidence="9">3-hydroxy-3-methylglutaryl coenzyme A reductase 1</fullName>
        <shortName evidence="9">CsHMGR1</shortName>
        <shortName evidence="9">HMG-CoA reductase 1</shortName>
        <ecNumber evidence="6">1.1.1.34</ecNumber>
    </recommendedName>
</protein>
<reference key="1">
    <citation type="submission" date="2020-03" db="EMBL/GenBank/DDBJ databases">
        <title>Sequence and annotation of 42 cannabis genomes reveals extensive copy number variation in cannabinoid synthesis and pathogen resistance genes.</title>
        <authorList>
            <person name="Mckernan K.J."/>
            <person name="Helbert Y."/>
            <person name="Kane L.T."/>
            <person name="Ebling H."/>
            <person name="Zhang L."/>
            <person name="Liu B."/>
            <person name="Eaton Z."/>
            <person name="Mclaughlin S."/>
            <person name="Kingan S."/>
            <person name="Baybayan P."/>
            <person name="Concepcion G."/>
            <person name="Jordan M."/>
            <person name="Riva A."/>
            <person name="Barbazuk W."/>
            <person name="Harkins T."/>
        </authorList>
    </citation>
    <scope>NUCLEOTIDE SEQUENCE [LARGE SCALE GENOMIC DNA]</scope>
    <source>
        <strain>cv. Jamaican Lion 4</strain>
        <tissue>Leaf</tissue>
    </source>
</reference>
<reference key="2">
    <citation type="journal article" date="2017" name="PLoS ONE">
        <title>Terpene synthases from Cannabis sativa.</title>
        <authorList>
            <person name="Booth J.K."/>
            <person name="Page J.E."/>
            <person name="Bohlmann J."/>
        </authorList>
    </citation>
    <scope>NUCLEOTIDE SEQUENCE [MRNA] OF 5-576</scope>
    <scope>TISSUE SPECIFICITY</scope>
    <source>
        <strain>cv. Finola</strain>
        <strain>cv. Purple Kush TPS13</strain>
    </source>
</reference>